<protein>
    <recommendedName>
        <fullName evidence="1">Large ribosomal subunit protein bL35</fullName>
    </recommendedName>
    <alternativeName>
        <fullName evidence="2">50S ribosomal protein L35</fullName>
    </alternativeName>
</protein>
<feature type="chain" id="PRO_1000050758" description="Large ribosomal subunit protein bL35">
    <location>
        <begin position="1"/>
        <end position="68"/>
    </location>
</feature>
<name>RL35_RICRS</name>
<dbReference type="EMBL" id="CP000848">
    <property type="protein sequence ID" value="ABV76522.1"/>
    <property type="molecule type" value="Genomic_DNA"/>
</dbReference>
<dbReference type="RefSeq" id="WP_004997924.1">
    <property type="nucleotide sequence ID" value="NZ_CP121767.1"/>
</dbReference>
<dbReference type="SMR" id="A8GSZ7"/>
<dbReference type="GeneID" id="95361427"/>
<dbReference type="KEGG" id="rri:A1G_05145"/>
<dbReference type="HOGENOM" id="CLU_169643_2_1_5"/>
<dbReference type="Proteomes" id="UP000006832">
    <property type="component" value="Chromosome"/>
</dbReference>
<dbReference type="GO" id="GO:0022625">
    <property type="term" value="C:cytosolic large ribosomal subunit"/>
    <property type="evidence" value="ECO:0007669"/>
    <property type="project" value="TreeGrafter"/>
</dbReference>
<dbReference type="GO" id="GO:0003735">
    <property type="term" value="F:structural constituent of ribosome"/>
    <property type="evidence" value="ECO:0007669"/>
    <property type="project" value="InterPro"/>
</dbReference>
<dbReference type="GO" id="GO:0006412">
    <property type="term" value="P:translation"/>
    <property type="evidence" value="ECO:0007669"/>
    <property type="project" value="UniProtKB-UniRule"/>
</dbReference>
<dbReference type="FunFam" id="4.10.410.60:FF:000001">
    <property type="entry name" value="50S ribosomal protein L35"/>
    <property type="match status" value="1"/>
</dbReference>
<dbReference type="Gene3D" id="4.10.410.60">
    <property type="match status" value="1"/>
</dbReference>
<dbReference type="HAMAP" id="MF_00514">
    <property type="entry name" value="Ribosomal_bL35"/>
    <property type="match status" value="1"/>
</dbReference>
<dbReference type="InterPro" id="IPR001706">
    <property type="entry name" value="Ribosomal_bL35"/>
</dbReference>
<dbReference type="InterPro" id="IPR021137">
    <property type="entry name" value="Ribosomal_bL35-like"/>
</dbReference>
<dbReference type="InterPro" id="IPR018265">
    <property type="entry name" value="Ribosomal_bL35_CS"/>
</dbReference>
<dbReference type="InterPro" id="IPR037229">
    <property type="entry name" value="Ribosomal_bL35_sf"/>
</dbReference>
<dbReference type="NCBIfam" id="TIGR00001">
    <property type="entry name" value="rpmI_bact"/>
    <property type="match status" value="1"/>
</dbReference>
<dbReference type="PANTHER" id="PTHR33343">
    <property type="entry name" value="54S RIBOSOMAL PROTEIN BL35M"/>
    <property type="match status" value="1"/>
</dbReference>
<dbReference type="PANTHER" id="PTHR33343:SF1">
    <property type="entry name" value="LARGE RIBOSOMAL SUBUNIT PROTEIN BL35M"/>
    <property type="match status" value="1"/>
</dbReference>
<dbReference type="Pfam" id="PF01632">
    <property type="entry name" value="Ribosomal_L35p"/>
    <property type="match status" value="1"/>
</dbReference>
<dbReference type="PRINTS" id="PR00064">
    <property type="entry name" value="RIBOSOMALL35"/>
</dbReference>
<dbReference type="SUPFAM" id="SSF143034">
    <property type="entry name" value="L35p-like"/>
    <property type="match status" value="1"/>
</dbReference>
<dbReference type="PROSITE" id="PS00936">
    <property type="entry name" value="RIBOSOMAL_L35"/>
    <property type="match status" value="1"/>
</dbReference>
<keyword id="KW-0687">Ribonucleoprotein</keyword>
<keyword id="KW-0689">Ribosomal protein</keyword>
<evidence type="ECO:0000255" key="1">
    <source>
        <dbReference type="HAMAP-Rule" id="MF_00514"/>
    </source>
</evidence>
<evidence type="ECO:0000305" key="2"/>
<proteinExistence type="inferred from homology"/>
<organism>
    <name type="scientific">Rickettsia rickettsii (strain Sheila Smith)</name>
    <dbReference type="NCBI Taxonomy" id="392021"/>
    <lineage>
        <taxon>Bacteria</taxon>
        <taxon>Pseudomonadati</taxon>
        <taxon>Pseudomonadota</taxon>
        <taxon>Alphaproteobacteria</taxon>
        <taxon>Rickettsiales</taxon>
        <taxon>Rickettsiaceae</taxon>
        <taxon>Rickettsieae</taxon>
        <taxon>Rickettsia</taxon>
        <taxon>spotted fever group</taxon>
    </lineage>
</organism>
<sequence>MPKLKTKSAVKKRFKLTASGKVIASQAGKKHFMRRRTKAQIRNLRGTTILCPQDGYNIKKYFLPYGIN</sequence>
<accession>A8GSZ7</accession>
<comment type="similarity">
    <text evidence="1">Belongs to the bacterial ribosomal protein bL35 family.</text>
</comment>
<reference key="1">
    <citation type="submission" date="2007-09" db="EMBL/GenBank/DDBJ databases">
        <title>Complete genome sequence of Rickettsia rickettsii.</title>
        <authorList>
            <person name="Madan A."/>
            <person name="Fahey J."/>
            <person name="Helton E."/>
            <person name="Ketteman M."/>
            <person name="Madan A."/>
            <person name="Rodrigues S."/>
            <person name="Sanchez A."/>
            <person name="Dasch G."/>
            <person name="Eremeeva M."/>
        </authorList>
    </citation>
    <scope>NUCLEOTIDE SEQUENCE [LARGE SCALE GENOMIC DNA]</scope>
    <source>
        <strain>Sheila Smith</strain>
    </source>
</reference>
<gene>
    <name evidence="1" type="primary">rpmI</name>
    <name type="ordered locus">A1G_05145</name>
</gene>